<protein>
    <recommendedName>
        <fullName evidence="2">Structure-specific endonuclease subunit SLX4</fullName>
    </recommendedName>
    <alternativeName>
        <fullName>Synthetic lethal of unknown function protein 4</fullName>
    </alternativeName>
</protein>
<accession>Q12098</accession>
<accession>D6VYD0</accession>
<feature type="chain" id="PRO_0000270574" description="Structure-specific endonuclease subunit SLX4">
    <location>
        <begin position="1"/>
        <end position="748"/>
    </location>
</feature>
<feature type="region of interest" description="Disordered" evidence="3">
    <location>
        <begin position="62"/>
        <end position="104"/>
    </location>
</feature>
<feature type="region of interest" description="Disordered" evidence="3">
    <location>
        <begin position="215"/>
        <end position="236"/>
    </location>
</feature>
<feature type="region of interest" description="Disordered" evidence="3">
    <location>
        <begin position="277"/>
        <end position="303"/>
    </location>
</feature>
<feature type="region of interest" description="Disordered" evidence="3">
    <location>
        <begin position="591"/>
        <end position="610"/>
    </location>
</feature>
<feature type="compositionally biased region" description="Polar residues" evidence="3">
    <location>
        <begin position="62"/>
        <end position="75"/>
    </location>
</feature>
<feature type="compositionally biased region" description="Basic and acidic residues" evidence="3">
    <location>
        <begin position="76"/>
        <end position="88"/>
    </location>
</feature>
<feature type="compositionally biased region" description="Basic and acidic residues" evidence="3">
    <location>
        <begin position="222"/>
        <end position="236"/>
    </location>
</feature>
<feature type="compositionally biased region" description="Polar residues" evidence="3">
    <location>
        <begin position="277"/>
        <end position="298"/>
    </location>
</feature>
<feature type="compositionally biased region" description="Polar residues" evidence="3">
    <location>
        <begin position="591"/>
        <end position="602"/>
    </location>
</feature>
<feature type="modified residue" description="Phosphothreonine; by ATR and ATM" evidence="12">
    <location>
        <position position="72"/>
    </location>
</feature>
<feature type="modified residue" description="Phosphothreonine; by ATR and ATM" evidence="1">
    <location>
        <position position="113"/>
    </location>
</feature>
<feature type="modified residue" description="Phosphoserine; by ATR and ATM" evidence="12">
    <location>
        <position position="289"/>
    </location>
</feature>
<feature type="modified residue" description="Phosphothreonine; by ATR and ATM" evidence="1">
    <location>
        <position position="319"/>
    </location>
</feature>
<feature type="modified residue" description="Phosphoserine; by ATR and ATM" evidence="12">
    <location>
        <position position="329"/>
    </location>
</feature>
<feature type="modified residue" description="Phosphoserine; by ATR and ATM" evidence="1">
    <location>
        <position position="355"/>
    </location>
</feature>
<feature type="strand" evidence="15">
    <location>
        <begin position="537"/>
        <end position="543"/>
    </location>
</feature>
<feature type="helix" evidence="15">
    <location>
        <begin position="544"/>
        <end position="549"/>
    </location>
</feature>
<feature type="strand" evidence="15">
    <location>
        <begin position="556"/>
        <end position="561"/>
    </location>
</feature>
<feature type="strand" evidence="15">
    <location>
        <begin position="578"/>
        <end position="584"/>
    </location>
</feature>
<feature type="turn" evidence="17">
    <location>
        <begin position="624"/>
        <end position="627"/>
    </location>
</feature>
<feature type="helix" evidence="17">
    <location>
        <begin position="630"/>
        <end position="640"/>
    </location>
</feature>
<feature type="helix" evidence="17">
    <location>
        <begin position="648"/>
        <end position="664"/>
    </location>
</feature>
<feature type="helix" evidence="16">
    <location>
        <begin position="676"/>
        <end position="678"/>
    </location>
</feature>
<feature type="helix" evidence="16">
    <location>
        <begin position="681"/>
        <end position="692"/>
    </location>
</feature>
<feature type="helix" evidence="16">
    <location>
        <begin position="696"/>
        <end position="703"/>
    </location>
</feature>
<feature type="helix" evidence="16">
    <location>
        <begin position="710"/>
        <end position="720"/>
    </location>
</feature>
<feature type="helix" evidence="16">
    <location>
        <begin position="722"/>
        <end position="726"/>
    </location>
</feature>
<feature type="helix" evidence="16">
    <location>
        <begin position="729"/>
        <end position="739"/>
    </location>
</feature>
<proteinExistence type="evidence at protein level"/>
<comment type="function">
    <text evidence="2 4 5 6 8 9 10 12 13 14">Regulatory subunit that interacts with and increases the activity of different structure-specific endonucleases. Has several distinct roles in protecting genome stability by resolving diverse forms of deleterious DNA structures. Component of the SLX1-SLX4 structure-specific endonuclease that resolves DNA secondary structures generated during DNA repair and recombination. Has endonuclease activity towards branched DNA substrates, introducing single-strand cuts in duplex DNA close to junctions with ss-DNA. Has a preference for simple Y, 5'-flap and replication fork-like structures. It cleaves the strand bearing the 5'-non-homologous arm at the branch site junction and generates ligatable, nicked products from the 5'-flap or replication fork substrates. Plays a critical role in maintaining the integrity of the ribosomal DNA (rDNA) loci, where it has a role in re-starting stalled replication forks. Has Holliday junction resolvase activity in vitro. Interacts with the structure-specific RAD1-RAD10 endonuclease and promotes RAD1-RAD10-dependent 3'-non-homologous tail removal (NHTR) during repair of double-strand breaks by single-strand annealing. SLX4 also promotes recovery from DNA-alkylation-induced replisome stalling during DNA replication by facilitating the error-free mode of lesion bypass. This does not require SLX1 or RAD1-RAD10, but probably RTT107.</text>
</comment>
<comment type="subunit">
    <text evidence="2 4 10 11 12 13">Forms a heterodimer with SLX1. Interacts with RAD1; catalytic subunit of the RAD1-RAD10 endonuclease. Interacts with RTT107.</text>
</comment>
<comment type="interaction">
    <interactant intactId="EBI-37788">
        <id>Q12098</id>
    </interactant>
    <interactant intactId="EBI-25984">
        <id>P47027</id>
        <label>DPB11</label>
    </interactant>
    <organismsDiffer>false</organismsDiffer>
    <experiments>2</experiments>
</comment>
<comment type="interaction">
    <interactant intactId="EBI-37788">
        <id>Q12098</id>
    </interactant>
    <interactant intactId="EBI-14752">
        <id>P06777</id>
        <label>RAD1</label>
    </interactant>
    <organismsDiffer>false</organismsDiffer>
    <experiments>3</experiments>
</comment>
<comment type="interaction">
    <interactant intactId="EBI-37788">
        <id>Q12098</id>
    </interactant>
    <interactant intactId="EBI-24788">
        <id>P38850</id>
        <label>RTT107</label>
    </interactant>
    <organismsDiffer>false</organismsDiffer>
    <experiments>7</experiments>
</comment>
<comment type="interaction">
    <interactant intactId="EBI-37788">
        <id>Q12098</id>
    </interactant>
    <interactant intactId="EBI-21016">
        <id>P38324</id>
        <label>SLX1</label>
    </interactant>
    <organismsDiffer>false</organismsDiffer>
    <experiments>6</experiments>
</comment>
<comment type="subcellular location">
    <subcellularLocation>
        <location>Nucleus</location>
    </subcellularLocation>
    <subcellularLocation>
        <location>Cytoplasm</location>
    </subcellularLocation>
</comment>
<comment type="PTM">
    <text evidence="2 9 12">Phosphorylated by ATR (MEC1) and ATM (TEL1) upon DNA damage. This appears to be required for the function with the RAD1-RAD10 endonuclease.</text>
</comment>
<comment type="miscellaneous">
    <text evidence="7">Present with 274 molecules/cell in log phase SD medium.</text>
</comment>
<comment type="similarity">
    <text evidence="2">Belongs to the SLX4 family.</text>
</comment>
<reference key="1">
    <citation type="journal article" date="1997" name="Nature">
        <title>The nucleotide sequence of Saccharomyces cerevisiae chromosome XII.</title>
        <authorList>
            <person name="Johnston M."/>
            <person name="Hillier L.W."/>
            <person name="Riles L."/>
            <person name="Albermann K."/>
            <person name="Andre B."/>
            <person name="Ansorge W."/>
            <person name="Benes V."/>
            <person name="Brueckner M."/>
            <person name="Delius H."/>
            <person name="Dubois E."/>
            <person name="Duesterhoeft A."/>
            <person name="Entian K.-D."/>
            <person name="Floeth M."/>
            <person name="Goffeau A."/>
            <person name="Hebling U."/>
            <person name="Heumann K."/>
            <person name="Heuss-Neitzel D."/>
            <person name="Hilbert H."/>
            <person name="Hilger F."/>
            <person name="Kleine K."/>
            <person name="Koetter P."/>
            <person name="Louis E.J."/>
            <person name="Messenguy F."/>
            <person name="Mewes H.-W."/>
            <person name="Miosga T."/>
            <person name="Moestl D."/>
            <person name="Mueller-Auer S."/>
            <person name="Nentwich U."/>
            <person name="Obermaier B."/>
            <person name="Piravandi E."/>
            <person name="Pohl T.M."/>
            <person name="Portetelle D."/>
            <person name="Purnelle B."/>
            <person name="Rechmann S."/>
            <person name="Rieger M."/>
            <person name="Rinke M."/>
            <person name="Rose M."/>
            <person name="Scharfe M."/>
            <person name="Scherens B."/>
            <person name="Scholler P."/>
            <person name="Schwager C."/>
            <person name="Schwarz S."/>
            <person name="Underwood A.P."/>
            <person name="Urrestarazu L.A."/>
            <person name="Vandenbol M."/>
            <person name="Verhasselt P."/>
            <person name="Vierendeels F."/>
            <person name="Voet M."/>
            <person name="Volckaert G."/>
            <person name="Voss H."/>
            <person name="Wambutt R."/>
            <person name="Wedler E."/>
            <person name="Wedler H."/>
            <person name="Zimmermann F.K."/>
            <person name="Zollner A."/>
            <person name="Hani J."/>
            <person name="Hoheisel J.D."/>
        </authorList>
    </citation>
    <scope>NUCLEOTIDE SEQUENCE [LARGE SCALE GENOMIC DNA]</scope>
    <source>
        <strain>ATCC 204508 / S288c</strain>
    </source>
</reference>
<reference key="2">
    <citation type="journal article" date="2014" name="G3 (Bethesda)">
        <title>The reference genome sequence of Saccharomyces cerevisiae: Then and now.</title>
        <authorList>
            <person name="Engel S.R."/>
            <person name="Dietrich F.S."/>
            <person name="Fisk D.G."/>
            <person name="Binkley G."/>
            <person name="Balakrishnan R."/>
            <person name="Costanzo M.C."/>
            <person name="Dwight S.S."/>
            <person name="Hitz B.C."/>
            <person name="Karra K."/>
            <person name="Nash R.S."/>
            <person name="Weng S."/>
            <person name="Wong E.D."/>
            <person name="Lloyd P."/>
            <person name="Skrzypek M.S."/>
            <person name="Miyasato S.R."/>
            <person name="Simison M."/>
            <person name="Cherry J.M."/>
        </authorList>
    </citation>
    <scope>GENOME REANNOTATION</scope>
    <source>
        <strain>ATCC 204508 / S288c</strain>
    </source>
</reference>
<reference key="3">
    <citation type="journal article" date="2007" name="Genome Res.">
        <title>Approaching a complete repository of sequence-verified protein-encoding clones for Saccharomyces cerevisiae.</title>
        <authorList>
            <person name="Hu Y."/>
            <person name="Rolfs A."/>
            <person name="Bhullar B."/>
            <person name="Murthy T.V.S."/>
            <person name="Zhu C."/>
            <person name="Berger M.F."/>
            <person name="Camargo A.A."/>
            <person name="Kelley F."/>
            <person name="McCarron S."/>
            <person name="Jepson D."/>
            <person name="Richardson A."/>
            <person name="Raphael J."/>
            <person name="Moreira D."/>
            <person name="Taycher E."/>
            <person name="Zuo D."/>
            <person name="Mohr S."/>
            <person name="Kane M.F."/>
            <person name="Williamson J."/>
            <person name="Simpson A.J.G."/>
            <person name="Bulyk M.L."/>
            <person name="Harlow E."/>
            <person name="Marsischky G."/>
            <person name="Kolodner R.D."/>
            <person name="LaBaer J."/>
        </authorList>
    </citation>
    <scope>NUCLEOTIDE SEQUENCE [GENOMIC DNA]</scope>
    <source>
        <strain>ATCC 204508 / S288c</strain>
    </source>
</reference>
<reference key="4">
    <citation type="journal article" date="2001" name="Genetics">
        <title>Requirement for three novel protein complexes in the absence of the Sgs1 DNA helicase in Saccharomyces cerevisiae.</title>
        <authorList>
            <person name="Mullen J.R."/>
            <person name="Kaliraman V."/>
            <person name="Ibrahim S.S."/>
            <person name="Brill S.J."/>
        </authorList>
    </citation>
    <scope>FUNCTION</scope>
    <scope>INTERACTION WITH SLX1</scope>
</reference>
<reference key="5">
    <citation type="journal article" date="2002" name="Curr. Genet.">
        <title>Role of SGS1 and SLX4 in maintaining rDNA structure in Saccharomyces cerevisiae.</title>
        <authorList>
            <person name="Kaliraman V."/>
            <person name="Brill S.J."/>
        </authorList>
    </citation>
    <scope>FUNCTION</scope>
</reference>
<reference key="6">
    <citation type="journal article" date="2003" name="Genes Dev.">
        <title>Slx1-Slx4 is a second structure-specific endonuclease functionally redundant with Sgs1-Top3.</title>
        <authorList>
            <person name="Fricke W.M."/>
            <person name="Brill S.J."/>
        </authorList>
    </citation>
    <scope>FUNCTION</scope>
    <scope>SUBCELLULAR LOCATION</scope>
</reference>
<reference key="7">
    <citation type="journal article" date="2003" name="Nature">
        <title>Global analysis of protein localization in budding yeast.</title>
        <authorList>
            <person name="Huh W.-K."/>
            <person name="Falvo J.V."/>
            <person name="Gerke L.C."/>
            <person name="Carroll A.S."/>
            <person name="Howson R.W."/>
            <person name="Weissman J.S."/>
            <person name="O'Shea E.K."/>
        </authorList>
    </citation>
    <scope>SUBCELLULAR LOCATION [LARGE SCALE ANALYSIS]</scope>
</reference>
<reference key="8">
    <citation type="journal article" date="2003" name="Nature">
        <title>Global analysis of protein expression in yeast.</title>
        <authorList>
            <person name="Ghaemmaghami S."/>
            <person name="Huh W.-K."/>
            <person name="Bower K."/>
            <person name="Howson R.W."/>
            <person name="Belle A."/>
            <person name="Dephoure N."/>
            <person name="O'Shea E.K."/>
            <person name="Weissman J.S."/>
        </authorList>
    </citation>
    <scope>LEVEL OF PROTEIN EXPRESSION [LARGE SCALE ANALYSIS]</scope>
</reference>
<reference key="9">
    <citation type="journal article" date="2005" name="Biochem. J.">
        <title>Slx4 becomes phosphorylated after DNA damage in a Mec1/Tel1-dependent manner and is required for repair of DNA alkylation damage.</title>
        <authorList>
            <person name="Flott S."/>
            <person name="Rouse J."/>
        </authorList>
    </citation>
    <scope>FUNCTION</scope>
    <scope>PHOSPHORYLATION BY MEC1 AND TEL1</scope>
</reference>
<reference key="10">
    <citation type="journal article" date="2005" name="Genetics">
        <title>Multiple endonucleases function to repair covalent topoisomerase I complexes in Saccharomyces cerevisiae.</title>
        <authorList>
            <person name="Deng C."/>
            <person name="Brown J.A."/>
            <person name="You D."/>
            <person name="Brown J.M."/>
        </authorList>
    </citation>
    <scope>FUNCTION</scope>
</reference>
<reference key="11">
    <citation type="journal article" date="2006" name="BMC Mol. Biol.">
        <title>Rtt107/Esc4 binds silent chromatin and DNA repair proteins using different BRCT motifs.</title>
        <authorList>
            <person name="Zappulla D.C."/>
            <person name="Maharaj A.S.R."/>
            <person name="Connelly J.J."/>
            <person name="Jockusch R.A."/>
            <person name="Sternglanz R."/>
        </authorList>
    </citation>
    <scope>INTERACTION WITH RTT107</scope>
</reference>
<reference key="12">
    <citation type="journal article" date="2006" name="Mol. Biol. Cell">
        <title>Slx4 regulates DNA damage checkpoint-dependent phosphorylation of the BRCT domain protein Rtt107/Esc4.</title>
        <authorList>
            <person name="Roberts T.M."/>
            <person name="Kobor M.S."/>
            <person name="Bastin-Shanower S.A."/>
            <person name="Ii M."/>
            <person name="Horte S.A."/>
            <person name="Gin J.W."/>
            <person name="Emili A."/>
            <person name="Rine J."/>
            <person name="Brill S.J."/>
            <person name="Brown G.W."/>
        </authorList>
    </citation>
    <scope>FUNCTION</scope>
    <scope>INTERACTION WITH RTT107</scope>
</reference>
<reference key="13">
    <citation type="journal article" date="2007" name="Mol. Cell. Biol.">
        <title>Phosphorylation of Slx4 by Mec1 and Tel1 regulates the single-strand annealing mode of DNA repair in budding yeast.</title>
        <authorList>
            <person name="Flott S."/>
            <person name="Alabert C."/>
            <person name="Toh G.W."/>
            <person name="Toth R."/>
            <person name="Sugawara N."/>
            <person name="Campbell D.G."/>
            <person name="Haber J.E."/>
            <person name="Pasero P."/>
            <person name="Rouse J."/>
        </authorList>
    </citation>
    <scope>FUNCTION</scope>
    <scope>INTERACTION WITH RAD1 AND SLX1</scope>
    <scope>PHOSPHORYLATION AT THR-72; SER-289 AND SER-329 BY MEC1 AND TEL1</scope>
</reference>
<reference key="14">
    <citation type="journal article" date="2008" name="Genetics">
        <title>Mutants defective in Rad1-Rad10-Slx4 exhibit a unique pattern of viability during mating-type switching in Saccharomyces cerevisiae.</title>
        <authorList>
            <person name="Lyndaker A.M."/>
            <person name="Goldfarb T."/>
            <person name="Alani E."/>
        </authorList>
    </citation>
    <scope>FUNCTION</scope>
</reference>
<reference key="15">
    <citation type="journal article" date="2008" name="Mol. Cell">
        <title>Microarray-based genetic screen defines SAW1, a gene required for Rad1/Rad10-dependent processing of recombination intermediates.</title>
        <authorList>
            <person name="Li F."/>
            <person name="Dong J."/>
            <person name="Pan X."/>
            <person name="Oum J.-H."/>
            <person name="Boeke J.D."/>
            <person name="Lee S.E."/>
        </authorList>
    </citation>
    <scope>FUNCTION</scope>
    <scope>INTERACTION WITH RAD1</scope>
</reference>
<reference key="16">
    <citation type="journal article" date="2008" name="Mol. Cell. Proteomics">
        <title>A multidimensional chromatography technology for in-depth phosphoproteome analysis.</title>
        <authorList>
            <person name="Albuquerque C.P."/>
            <person name="Smolka M.B."/>
            <person name="Payne S.H."/>
            <person name="Bafna V."/>
            <person name="Eng J."/>
            <person name="Zhou H."/>
        </authorList>
    </citation>
    <scope>IDENTIFICATION BY MASS SPECTROMETRY [LARGE SCALE ANALYSIS]</scope>
</reference>
<organism>
    <name type="scientific">Saccharomyces cerevisiae (strain ATCC 204508 / S288c)</name>
    <name type="common">Baker's yeast</name>
    <dbReference type="NCBI Taxonomy" id="559292"/>
    <lineage>
        <taxon>Eukaryota</taxon>
        <taxon>Fungi</taxon>
        <taxon>Dikarya</taxon>
        <taxon>Ascomycota</taxon>
        <taxon>Saccharomycotina</taxon>
        <taxon>Saccharomycetes</taxon>
        <taxon>Saccharomycetales</taxon>
        <taxon>Saccharomycetaceae</taxon>
        <taxon>Saccharomyces</taxon>
    </lineage>
</organism>
<evidence type="ECO:0000255" key="1"/>
<evidence type="ECO:0000255" key="2">
    <source>
        <dbReference type="HAMAP-Rule" id="MF_03110"/>
    </source>
</evidence>
<evidence type="ECO:0000256" key="3">
    <source>
        <dbReference type="SAM" id="MobiDB-lite"/>
    </source>
</evidence>
<evidence type="ECO:0000269" key="4">
    <source>
    </source>
</evidence>
<evidence type="ECO:0000269" key="5">
    <source>
    </source>
</evidence>
<evidence type="ECO:0000269" key="6">
    <source>
    </source>
</evidence>
<evidence type="ECO:0000269" key="7">
    <source>
    </source>
</evidence>
<evidence type="ECO:0000269" key="8">
    <source>
    </source>
</evidence>
<evidence type="ECO:0000269" key="9">
    <source>
    </source>
</evidence>
<evidence type="ECO:0000269" key="10">
    <source>
    </source>
</evidence>
<evidence type="ECO:0000269" key="11">
    <source>
    </source>
</evidence>
<evidence type="ECO:0000269" key="12">
    <source>
    </source>
</evidence>
<evidence type="ECO:0000269" key="13">
    <source>
    </source>
</evidence>
<evidence type="ECO:0000269" key="14">
    <source>
    </source>
</evidence>
<evidence type="ECO:0007829" key="15">
    <source>
        <dbReference type="PDB" id="6J0Y"/>
    </source>
</evidence>
<evidence type="ECO:0007829" key="16">
    <source>
        <dbReference type="PDB" id="7CQ3"/>
    </source>
</evidence>
<evidence type="ECO:0007829" key="17">
    <source>
        <dbReference type="PDB" id="7CQ4"/>
    </source>
</evidence>
<keyword id="KW-0002">3D-structure</keyword>
<keyword id="KW-0963">Cytoplasm</keyword>
<keyword id="KW-0227">DNA damage</keyword>
<keyword id="KW-0233">DNA recombination</keyword>
<keyword id="KW-0234">DNA repair</keyword>
<keyword id="KW-0539">Nucleus</keyword>
<keyword id="KW-0597">Phosphoprotein</keyword>
<keyword id="KW-1185">Reference proteome</keyword>
<sequence>MELQRAQRNLKFLQNEDYVNVTDQTNLNGESQNAYSLGMETQVPEMQFSLSSDDDSIGTQVKSVTAQKSPMTQETTKNDTERNKDVDKSCNPVSTSHPDLGGSNIEENIFINTQIQSRLDDAEEETNLKLKLEKFKYSFKSSNADDTHSNANVTAKRRPAIRKANSKLKTKPKTKRDPKIIKNITDFNINNYERSRTASLLKQLSGKHKKVLDIIKTQNEGNSDKPPRARNNKGEKATFDTYSEQEWKDIMKLLLQKFPQSEETDLNEVQKFLYGSEKSSNSLDNQESSQQRLWTASQLPPELPDEAIQPEQEERIRDTQSAVNFLSLSQVMDDKSEIMKDEESIIISRGDSTSSQEYGNGLEPQQPVGNVVGEDIELAVGTRINAFSLTDYKACKPMSVEVSRRCENSTDNDYDNISIVSDTTDETSTLFPLDQYRYVFIENDERPPLATDTIGSTQFFTPNTSPLDGIIDLTQESFKAVRSLISPLKVENNKTGVTSQASNQVQVPATRTPTIIPQKNLTTTLKTEEEKNNIGSSIRVKLLQESVVKLNPKLVKHNFYRVEANDSEEEETEFDDQFCIADIQLVDSSKISTKDSTQNPTTSNDIIDTSAASSIASPEKFCEIMMSQSMKELRQSLKTVGLKPMRTKVEIIQSLQTASQILSTANPDNKGEHGGVANFSKIEIFDHLTELIEAFPDFLERIYTFEPIPLNELIEKLFSAEPFVSQIDEMTIREWADVQGICLRNDKK</sequence>
<dbReference type="EMBL" id="Z73307">
    <property type="protein sequence ID" value="CAA97706.1"/>
    <property type="molecule type" value="Genomic_DNA"/>
</dbReference>
<dbReference type="EMBL" id="U53881">
    <property type="protein sequence ID" value="AAB82394.1"/>
    <property type="molecule type" value="Genomic_DNA"/>
</dbReference>
<dbReference type="EMBL" id="X91258">
    <property type="protein sequence ID" value="CAA62650.1"/>
    <property type="molecule type" value="Genomic_DNA"/>
</dbReference>
<dbReference type="EMBL" id="AY692839">
    <property type="protein sequence ID" value="AAT92858.1"/>
    <property type="molecule type" value="Genomic_DNA"/>
</dbReference>
<dbReference type="EMBL" id="BK006945">
    <property type="protein sequence ID" value="DAA09446.1"/>
    <property type="molecule type" value="Genomic_DNA"/>
</dbReference>
<dbReference type="PIR" id="S59327">
    <property type="entry name" value="S59327"/>
</dbReference>
<dbReference type="RefSeq" id="NP_013236.1">
    <property type="nucleotide sequence ID" value="NM_001182022.1"/>
</dbReference>
<dbReference type="PDB" id="6J0Y">
    <property type="method" value="X-ray"/>
    <property type="resolution" value="1.80 A"/>
    <property type="chains" value="C/D=535-587"/>
</dbReference>
<dbReference type="PDB" id="7CQ2">
    <property type="method" value="X-ray"/>
    <property type="resolution" value="2.50 A"/>
    <property type="chains" value="C/D=610-747"/>
</dbReference>
<dbReference type="PDB" id="7CQ3">
    <property type="method" value="X-ray"/>
    <property type="resolution" value="1.45 A"/>
    <property type="chains" value="B=675-748"/>
</dbReference>
<dbReference type="PDB" id="7CQ4">
    <property type="method" value="X-ray"/>
    <property type="resolution" value="3.29 A"/>
    <property type="chains" value="B=610-748"/>
</dbReference>
<dbReference type="PDBsum" id="6J0Y"/>
<dbReference type="PDBsum" id="7CQ2"/>
<dbReference type="PDBsum" id="7CQ3"/>
<dbReference type="PDBsum" id="7CQ4"/>
<dbReference type="SMR" id="Q12098"/>
<dbReference type="BioGRID" id="31404">
    <property type="interactions" value="297"/>
</dbReference>
<dbReference type="ComplexPortal" id="CPX-1355">
    <property type="entry name" value="RTT107-SLX4-SLX1 complex"/>
</dbReference>
<dbReference type="ComplexPortal" id="CPX-1362">
    <property type="entry name" value="SLX4-RAD1-RAD10 endonuclease complex"/>
</dbReference>
<dbReference type="ComplexPortal" id="CPX-3159">
    <property type="entry name" value="SLX1-SLX4 structure-specific endonuclease complex"/>
</dbReference>
<dbReference type="DIP" id="DIP-1771N"/>
<dbReference type="FunCoup" id="Q12098">
    <property type="interactions" value="54"/>
</dbReference>
<dbReference type="IntAct" id="Q12098">
    <property type="interactions" value="8"/>
</dbReference>
<dbReference type="MINT" id="Q12098"/>
<dbReference type="STRING" id="4932.YLR135W"/>
<dbReference type="iPTMnet" id="Q12098"/>
<dbReference type="PaxDb" id="4932-YLR135W"/>
<dbReference type="PeptideAtlas" id="Q12098"/>
<dbReference type="EnsemblFungi" id="YLR135W_mRNA">
    <property type="protein sequence ID" value="YLR135W"/>
    <property type="gene ID" value="YLR135W"/>
</dbReference>
<dbReference type="GeneID" id="850826"/>
<dbReference type="KEGG" id="sce:YLR135W"/>
<dbReference type="AGR" id="SGD:S000004125"/>
<dbReference type="SGD" id="S000004125">
    <property type="gene designation" value="SLX4"/>
</dbReference>
<dbReference type="VEuPathDB" id="FungiDB:YLR135W"/>
<dbReference type="eggNOG" id="ENOG502RYEW">
    <property type="taxonomic scope" value="Eukaryota"/>
</dbReference>
<dbReference type="HOGENOM" id="CLU_022388_0_0_1"/>
<dbReference type="InParanoid" id="Q12098"/>
<dbReference type="OMA" id="FMNTQIQ"/>
<dbReference type="OrthoDB" id="4066789at2759"/>
<dbReference type="BioCyc" id="YEAST:G3O-32275-MONOMER"/>
<dbReference type="BioGRID-ORCS" id="850826">
    <property type="hits" value="0 hits in 10 CRISPR screens"/>
</dbReference>
<dbReference type="PRO" id="PR:Q12098"/>
<dbReference type="Proteomes" id="UP000002311">
    <property type="component" value="Chromosome XII"/>
</dbReference>
<dbReference type="RNAct" id="Q12098">
    <property type="molecule type" value="protein"/>
</dbReference>
<dbReference type="GO" id="GO:0005737">
    <property type="term" value="C:cytoplasm"/>
    <property type="evidence" value="ECO:0007669"/>
    <property type="project" value="UniProtKB-SubCell"/>
</dbReference>
<dbReference type="GO" id="GO:1905348">
    <property type="term" value="C:endonuclease complex"/>
    <property type="evidence" value="ECO:0000353"/>
    <property type="project" value="ComplexPortal"/>
</dbReference>
<dbReference type="GO" id="GO:0000228">
    <property type="term" value="C:nuclear chromosome"/>
    <property type="evidence" value="ECO:0000303"/>
    <property type="project" value="ComplexPortal"/>
</dbReference>
<dbReference type="GO" id="GO:0005634">
    <property type="term" value="C:nucleus"/>
    <property type="evidence" value="ECO:0000315"/>
    <property type="project" value="SGD"/>
</dbReference>
<dbReference type="GO" id="GO:0033557">
    <property type="term" value="C:Slx1-Slx4 complex"/>
    <property type="evidence" value="ECO:0000353"/>
    <property type="project" value="SGD"/>
</dbReference>
<dbReference type="GO" id="GO:0017108">
    <property type="term" value="F:5'-flap endonuclease activity"/>
    <property type="evidence" value="ECO:0000314"/>
    <property type="project" value="SGD"/>
</dbReference>
<dbReference type="GO" id="GO:0006974">
    <property type="term" value="P:DNA damage response"/>
    <property type="evidence" value="ECO:0000316"/>
    <property type="project" value="SGD"/>
</dbReference>
<dbReference type="GO" id="GO:0006260">
    <property type="term" value="P:DNA replication"/>
    <property type="evidence" value="ECO:0000315"/>
    <property type="project" value="SGD"/>
</dbReference>
<dbReference type="GO" id="GO:0006261">
    <property type="term" value="P:DNA-templated DNA replication"/>
    <property type="evidence" value="ECO:0000316"/>
    <property type="project" value="SGD"/>
</dbReference>
<dbReference type="GO" id="GO:0000727">
    <property type="term" value="P:double-strand break repair via break-induced replication"/>
    <property type="evidence" value="ECO:0000316"/>
    <property type="project" value="SGD"/>
</dbReference>
<dbReference type="GO" id="GO:0000736">
    <property type="term" value="P:double-strand break repair via single-strand annealing, removal of nonhomologous ends"/>
    <property type="evidence" value="ECO:0000315"/>
    <property type="project" value="SGD"/>
</dbReference>
<dbReference type="GO" id="GO:0036297">
    <property type="term" value="P:interstrand cross-link repair"/>
    <property type="evidence" value="ECO:0000316"/>
    <property type="project" value="SGD"/>
</dbReference>
<dbReference type="GO" id="GO:2000001">
    <property type="term" value="P:regulation of DNA damage checkpoint"/>
    <property type="evidence" value="ECO:0000315"/>
    <property type="project" value="SGD"/>
</dbReference>
<dbReference type="GO" id="GO:1903775">
    <property type="term" value="P:regulation of DNA double-strand break processing"/>
    <property type="evidence" value="ECO:0000315"/>
    <property type="project" value="SGD"/>
</dbReference>
<dbReference type="GO" id="GO:1905261">
    <property type="term" value="P:regulation of meiotic DNA double-strand break formation involved in reciprocal meiotic recombination"/>
    <property type="evidence" value="ECO:0000315"/>
    <property type="project" value="SGD"/>
</dbReference>
<dbReference type="GO" id="GO:1902681">
    <property type="term" value="P:regulation of replication fork arrest at rDNA repeats"/>
    <property type="evidence" value="ECO:0000303"/>
    <property type="project" value="ComplexPortal"/>
</dbReference>
<dbReference type="CDD" id="cd22869">
    <property type="entry name" value="SLX4_RIM2"/>
    <property type="match status" value="1"/>
</dbReference>
<dbReference type="HAMAP" id="MF_03110">
    <property type="entry name" value="Endonuc_su_Slx4"/>
    <property type="match status" value="1"/>
</dbReference>
<dbReference type="InterPro" id="IPR027784">
    <property type="entry name" value="Slx4_ascomycetes"/>
</dbReference>
<dbReference type="InterPro" id="IPR018574">
    <property type="entry name" value="Structure-sp_endonuc_su_Slx4"/>
</dbReference>
<dbReference type="Pfam" id="PF09494">
    <property type="entry name" value="Slx4"/>
    <property type="match status" value="1"/>
</dbReference>
<gene>
    <name evidence="2" type="primary">SLX4</name>
    <name type="ordered locus">YLR135W</name>
    <name type="ORF">L3140</name>
</gene>
<name>SLX4_YEAST</name>